<comment type="catalytic activity">
    <reaction>
        <text>an acyl phosphate + H2O = a carboxylate + phosphate + H(+)</text>
        <dbReference type="Rhea" id="RHEA:14965"/>
        <dbReference type="ChEBI" id="CHEBI:15377"/>
        <dbReference type="ChEBI" id="CHEBI:15378"/>
        <dbReference type="ChEBI" id="CHEBI:29067"/>
        <dbReference type="ChEBI" id="CHEBI:43474"/>
        <dbReference type="ChEBI" id="CHEBI:59918"/>
        <dbReference type="EC" id="3.6.1.7"/>
    </reaction>
</comment>
<comment type="similarity">
    <text evidence="2">Belongs to the acylphosphatase family.</text>
</comment>
<proteinExistence type="inferred from homology"/>
<protein>
    <recommendedName>
        <fullName>Acylphosphatase</fullName>
        <ecNumber>3.6.1.7</ecNumber>
    </recommendedName>
    <alternativeName>
        <fullName>Acylphosphate phosphohydrolase</fullName>
    </alternativeName>
</protein>
<accession>Q30YK6</accession>
<name>ACYP_OLEA2</name>
<evidence type="ECO:0000255" key="1">
    <source>
        <dbReference type="PROSITE-ProRule" id="PRU00520"/>
    </source>
</evidence>
<evidence type="ECO:0000305" key="2"/>
<gene>
    <name type="primary">acyP</name>
    <name type="ordered locus">Dde_2443</name>
</gene>
<dbReference type="EC" id="3.6.1.7"/>
<dbReference type="EMBL" id="CP000112">
    <property type="protein sequence ID" value="ABB39240.1"/>
    <property type="molecule type" value="Genomic_DNA"/>
</dbReference>
<dbReference type="SMR" id="Q30YK6"/>
<dbReference type="STRING" id="207559.Dde_2443"/>
<dbReference type="KEGG" id="dde:Dde_2443"/>
<dbReference type="eggNOG" id="COG1254">
    <property type="taxonomic scope" value="Bacteria"/>
</dbReference>
<dbReference type="HOGENOM" id="CLU_141932_1_0_7"/>
<dbReference type="Proteomes" id="UP000002710">
    <property type="component" value="Chromosome"/>
</dbReference>
<dbReference type="GO" id="GO:0003998">
    <property type="term" value="F:acylphosphatase activity"/>
    <property type="evidence" value="ECO:0007669"/>
    <property type="project" value="UniProtKB-EC"/>
</dbReference>
<dbReference type="Gene3D" id="3.30.70.100">
    <property type="match status" value="1"/>
</dbReference>
<dbReference type="InterPro" id="IPR020456">
    <property type="entry name" value="Acylphosphatase"/>
</dbReference>
<dbReference type="InterPro" id="IPR001792">
    <property type="entry name" value="Acylphosphatase-like_dom"/>
</dbReference>
<dbReference type="InterPro" id="IPR036046">
    <property type="entry name" value="Acylphosphatase-like_dom_sf"/>
</dbReference>
<dbReference type="InterPro" id="IPR017968">
    <property type="entry name" value="Acylphosphatase_CS"/>
</dbReference>
<dbReference type="PANTHER" id="PTHR47268">
    <property type="entry name" value="ACYLPHOSPHATASE"/>
    <property type="match status" value="1"/>
</dbReference>
<dbReference type="PANTHER" id="PTHR47268:SF4">
    <property type="entry name" value="ACYLPHOSPHATASE"/>
    <property type="match status" value="1"/>
</dbReference>
<dbReference type="Pfam" id="PF00708">
    <property type="entry name" value="Acylphosphatase"/>
    <property type="match status" value="1"/>
</dbReference>
<dbReference type="PRINTS" id="PR00112">
    <property type="entry name" value="ACYLPHPHTASE"/>
</dbReference>
<dbReference type="SUPFAM" id="SSF54975">
    <property type="entry name" value="Acylphosphatase/BLUF domain-like"/>
    <property type="match status" value="1"/>
</dbReference>
<dbReference type="PROSITE" id="PS00150">
    <property type="entry name" value="ACYLPHOSPHATASE_1"/>
    <property type="match status" value="1"/>
</dbReference>
<dbReference type="PROSITE" id="PS00151">
    <property type="entry name" value="ACYLPHOSPHATASE_2"/>
    <property type="match status" value="1"/>
</dbReference>
<dbReference type="PROSITE" id="PS51160">
    <property type="entry name" value="ACYLPHOSPHATASE_3"/>
    <property type="match status" value="1"/>
</dbReference>
<organism>
    <name type="scientific">Oleidesulfovibrio alaskensis (strain ATCC BAA-1058 / DSM 17464 / G20)</name>
    <name type="common">Desulfovibrio alaskensis</name>
    <dbReference type="NCBI Taxonomy" id="207559"/>
    <lineage>
        <taxon>Bacteria</taxon>
        <taxon>Pseudomonadati</taxon>
        <taxon>Thermodesulfobacteriota</taxon>
        <taxon>Desulfovibrionia</taxon>
        <taxon>Desulfovibrionales</taxon>
        <taxon>Desulfovibrionaceae</taxon>
        <taxon>Oleidesulfovibrio</taxon>
    </lineage>
</organism>
<reference key="1">
    <citation type="journal article" date="2011" name="J. Bacteriol.">
        <title>Complete genome sequence and updated annotation of Desulfovibrio alaskensis G20.</title>
        <authorList>
            <person name="Hauser L.J."/>
            <person name="Land M.L."/>
            <person name="Brown S.D."/>
            <person name="Larimer F."/>
            <person name="Keller K.L."/>
            <person name="Rapp-Giles B.J."/>
            <person name="Price M.N."/>
            <person name="Lin M."/>
            <person name="Bruce D.C."/>
            <person name="Detter J.C."/>
            <person name="Tapia R."/>
            <person name="Han C.S."/>
            <person name="Goodwin L.A."/>
            <person name="Cheng J.F."/>
            <person name="Pitluck S."/>
            <person name="Copeland A."/>
            <person name="Lucas S."/>
            <person name="Nolan M."/>
            <person name="Lapidus A.L."/>
            <person name="Palumbo A.V."/>
            <person name="Wall J.D."/>
        </authorList>
    </citation>
    <scope>NUCLEOTIDE SEQUENCE [LARGE SCALE GENOMIC DNA]</scope>
    <source>
        <strain>ATCC BAA-1058 / DSM 17464 / G20</strain>
    </source>
</reference>
<sequence length="68" mass="7211">MNRIACTVHGRVQGVGFRYWTKRKAAALGLRGWVKNAPDGTVMLEAAGEAGLWMSLPGRCTAGLPSAP</sequence>
<keyword id="KW-0378">Hydrolase</keyword>
<keyword id="KW-1185">Reference proteome</keyword>
<feature type="chain" id="PRO_0000326701" description="Acylphosphatase">
    <location>
        <begin position="1"/>
        <end position="68"/>
    </location>
</feature>
<feature type="domain" description="Acylphosphatase-like" evidence="1">
    <location>
        <begin position="3"/>
        <end position="68"/>
    </location>
</feature>
<feature type="active site" evidence="1">
    <location>
        <position position="18"/>
    </location>
</feature>
<feature type="active site" evidence="1">
    <location>
        <position position="36"/>
    </location>
</feature>